<dbReference type="EMBL" id="D29802">
    <property type="protein sequence ID" value="BAA06185.1"/>
    <property type="molecule type" value="mRNA"/>
</dbReference>
<dbReference type="EMBL" id="X75313">
    <property type="protein sequence ID" value="CAA53062.1"/>
    <property type="molecule type" value="mRNA"/>
</dbReference>
<dbReference type="EMBL" id="AK002493">
    <property type="protein sequence ID" value="BAB22141.1"/>
    <property type="molecule type" value="mRNA"/>
</dbReference>
<dbReference type="EMBL" id="AK012242">
    <property type="protein sequence ID" value="BAB28114.1"/>
    <property type="molecule type" value="mRNA"/>
</dbReference>
<dbReference type="EMBL" id="AK017772">
    <property type="protein sequence ID" value="BAB30920.1"/>
    <property type="molecule type" value="mRNA"/>
</dbReference>
<dbReference type="EMBL" id="AK051226">
    <property type="protein sequence ID" value="BAC34564.1"/>
    <property type="molecule type" value="mRNA"/>
</dbReference>
<dbReference type="EMBL" id="AK159797">
    <property type="protein sequence ID" value="BAE35378.1"/>
    <property type="molecule type" value="mRNA"/>
</dbReference>
<dbReference type="EMBL" id="AK160528">
    <property type="protein sequence ID" value="BAE35846.1"/>
    <property type="molecule type" value="mRNA"/>
</dbReference>
<dbReference type="EMBL" id="AK160739">
    <property type="protein sequence ID" value="BAE35980.1"/>
    <property type="molecule type" value="mRNA"/>
</dbReference>
<dbReference type="EMBL" id="AK161234">
    <property type="protein sequence ID" value="BAE36257.1"/>
    <property type="molecule type" value="mRNA"/>
</dbReference>
<dbReference type="EMBL" id="AK166417">
    <property type="protein sequence ID" value="BAE38762.1"/>
    <property type="molecule type" value="mRNA"/>
</dbReference>
<dbReference type="EMBL" id="AK166786">
    <property type="protein sequence ID" value="BAE39017.1"/>
    <property type="molecule type" value="mRNA"/>
</dbReference>
<dbReference type="EMBL" id="AK166800">
    <property type="protein sequence ID" value="BAE39028.1"/>
    <property type="molecule type" value="mRNA"/>
</dbReference>
<dbReference type="EMBL" id="AK166889">
    <property type="protein sequence ID" value="BAE39095.1"/>
    <property type="molecule type" value="mRNA"/>
</dbReference>
<dbReference type="EMBL" id="AK166945">
    <property type="protein sequence ID" value="BAE39133.1"/>
    <property type="molecule type" value="mRNA"/>
</dbReference>
<dbReference type="EMBL" id="AK168086">
    <property type="protein sequence ID" value="BAE40059.1"/>
    <property type="molecule type" value="mRNA"/>
</dbReference>
<dbReference type="EMBL" id="AK168096">
    <property type="protein sequence ID" value="BAE40068.1"/>
    <property type="molecule type" value="mRNA"/>
</dbReference>
<dbReference type="EMBL" id="AK168196">
    <property type="protein sequence ID" value="BAE40156.1"/>
    <property type="molecule type" value="mRNA"/>
</dbReference>
<dbReference type="EMBL" id="AK168349">
    <property type="protein sequence ID" value="BAE40286.1"/>
    <property type="molecule type" value="mRNA"/>
</dbReference>
<dbReference type="EMBL" id="AL645849">
    <property type="status" value="NOT_ANNOTATED_CDS"/>
    <property type="molecule type" value="Genomic_DNA"/>
</dbReference>
<dbReference type="EMBL" id="CH466575">
    <property type="protein sequence ID" value="EDL33791.1"/>
    <property type="molecule type" value="Genomic_DNA"/>
</dbReference>
<dbReference type="EMBL" id="BC046760">
    <property type="protein sequence ID" value="AAH46760.1"/>
    <property type="molecule type" value="mRNA"/>
</dbReference>
<dbReference type="EMBL" id="AF295529">
    <property type="protein sequence ID" value="AAG29506.1"/>
    <property type="status" value="ALT_FRAME"/>
    <property type="molecule type" value="Genomic_DNA"/>
</dbReference>
<dbReference type="CCDS" id="CCDS24585.1"/>
<dbReference type="PIR" id="S38398">
    <property type="entry name" value="S38398"/>
</dbReference>
<dbReference type="RefSeq" id="NP_032169.1">
    <property type="nucleotide sequence ID" value="NM_008143.3"/>
</dbReference>
<dbReference type="PDB" id="7CPU">
    <property type="method" value="EM"/>
    <property type="resolution" value="2.82 A"/>
    <property type="chains" value="Sg=1-317"/>
</dbReference>
<dbReference type="PDB" id="7CPV">
    <property type="method" value="EM"/>
    <property type="resolution" value="3.03 A"/>
    <property type="chains" value="Sg=1-317"/>
</dbReference>
<dbReference type="PDB" id="7LS1">
    <property type="method" value="EM"/>
    <property type="resolution" value="3.30 A"/>
    <property type="chains" value="I3=1-317"/>
</dbReference>
<dbReference type="PDB" id="7LS2">
    <property type="method" value="EM"/>
    <property type="resolution" value="3.10 A"/>
    <property type="chains" value="I3=1-317"/>
</dbReference>
<dbReference type="PDBsum" id="7CPU"/>
<dbReference type="PDBsum" id="7CPV"/>
<dbReference type="PDBsum" id="7LS1"/>
<dbReference type="PDBsum" id="7LS2"/>
<dbReference type="EMDB" id="EMD-23500"/>
<dbReference type="EMDB" id="EMD-23501"/>
<dbReference type="EMDB" id="EMD-30432"/>
<dbReference type="EMDB" id="EMD-30433"/>
<dbReference type="SMR" id="P68040"/>
<dbReference type="BioGRID" id="199978">
    <property type="interactions" value="107"/>
</dbReference>
<dbReference type="CORUM" id="P68040"/>
<dbReference type="FunCoup" id="P68040">
    <property type="interactions" value="2584"/>
</dbReference>
<dbReference type="IntAct" id="P68040">
    <property type="interactions" value="23"/>
</dbReference>
<dbReference type="MINT" id="P68040"/>
<dbReference type="STRING" id="10090.ENSMUSP00000020640"/>
<dbReference type="GlyGen" id="P68040">
    <property type="glycosylation" value="2 sites, 1 O-linked glycan (2 sites)"/>
</dbReference>
<dbReference type="iPTMnet" id="P68040"/>
<dbReference type="PhosphoSitePlus" id="P68040"/>
<dbReference type="SwissPalm" id="P68040"/>
<dbReference type="REPRODUCTION-2DPAGE" id="P68040"/>
<dbReference type="jPOST" id="P68040"/>
<dbReference type="PaxDb" id="10090-ENSMUSP00000020640"/>
<dbReference type="PeptideAtlas" id="P68040"/>
<dbReference type="ProteomicsDB" id="300295"/>
<dbReference type="Pumba" id="P68040"/>
<dbReference type="TopDownProteomics" id="P68040"/>
<dbReference type="Antibodypedia" id="3802">
    <property type="antibodies" value="464 antibodies from 44 providers"/>
</dbReference>
<dbReference type="DNASU" id="14694"/>
<dbReference type="Ensembl" id="ENSMUST00000020640.8">
    <property type="protein sequence ID" value="ENSMUSP00000020640.8"/>
    <property type="gene ID" value="ENSMUSG00000020372.16"/>
</dbReference>
<dbReference type="GeneID" id="14694"/>
<dbReference type="KEGG" id="mmu:14694"/>
<dbReference type="UCSC" id="uc007ipa.1">
    <property type="organism name" value="mouse"/>
</dbReference>
<dbReference type="AGR" id="MGI:101849"/>
<dbReference type="CTD" id="10399"/>
<dbReference type="MGI" id="MGI:101849">
    <property type="gene designation" value="Rack1"/>
</dbReference>
<dbReference type="VEuPathDB" id="HostDB:ENSMUSG00000020372"/>
<dbReference type="eggNOG" id="KOG0279">
    <property type="taxonomic scope" value="Eukaryota"/>
</dbReference>
<dbReference type="GeneTree" id="ENSGT00940000154461"/>
<dbReference type="HOGENOM" id="CLU_000288_57_7_1"/>
<dbReference type="InParanoid" id="P68040"/>
<dbReference type="OMA" id="NCKLKIN"/>
<dbReference type="OrthoDB" id="7875889at2759"/>
<dbReference type="PhylomeDB" id="P68040"/>
<dbReference type="TreeFam" id="TF300600"/>
<dbReference type="Reactome" id="R-MMU-5357905">
    <property type="pathway name" value="Regulation of TNFR1 signaling"/>
</dbReference>
<dbReference type="Reactome" id="R-MMU-5357956">
    <property type="pathway name" value="TNFR1-induced NF-kappa-B signaling pathway"/>
</dbReference>
<dbReference type="Reactome" id="R-MMU-5626978">
    <property type="pathway name" value="TNFR1-mediated ceramide production"/>
</dbReference>
<dbReference type="BioGRID-ORCS" id="14694">
    <property type="hits" value="31 hits in 76 CRISPR screens"/>
</dbReference>
<dbReference type="ChiTaRS" id="Rack1">
    <property type="organism name" value="mouse"/>
</dbReference>
<dbReference type="PRO" id="PR:P68040"/>
<dbReference type="Proteomes" id="UP000000589">
    <property type="component" value="Chromosome 11"/>
</dbReference>
<dbReference type="RNAct" id="P68040">
    <property type="molecule type" value="protein"/>
</dbReference>
<dbReference type="Bgee" id="ENSMUSG00000020372">
    <property type="expression patterns" value="Expressed in epiblast (generic) and 73 other cell types or tissues"/>
</dbReference>
<dbReference type="GO" id="GO:0044297">
    <property type="term" value="C:cell body"/>
    <property type="evidence" value="ECO:0000314"/>
    <property type="project" value="ParkinsonsUK-UCL"/>
</dbReference>
<dbReference type="GO" id="GO:0005737">
    <property type="term" value="C:cytoplasm"/>
    <property type="evidence" value="ECO:0000314"/>
    <property type="project" value="MGI"/>
</dbReference>
<dbReference type="GO" id="GO:0005829">
    <property type="term" value="C:cytosol"/>
    <property type="evidence" value="ECO:0007669"/>
    <property type="project" value="Ensembl"/>
</dbReference>
<dbReference type="GO" id="GO:0030425">
    <property type="term" value="C:dendrite"/>
    <property type="evidence" value="ECO:0000314"/>
    <property type="project" value="UniProtKB"/>
</dbReference>
<dbReference type="GO" id="GO:1990630">
    <property type="term" value="C:IRE1-RACK1-PP2A complex"/>
    <property type="evidence" value="ECO:0007669"/>
    <property type="project" value="Ensembl"/>
</dbReference>
<dbReference type="GO" id="GO:0030496">
    <property type="term" value="C:midbody"/>
    <property type="evidence" value="ECO:0000250"/>
    <property type="project" value="UniProtKB"/>
</dbReference>
<dbReference type="GO" id="GO:0005739">
    <property type="term" value="C:mitochondrion"/>
    <property type="evidence" value="ECO:0007669"/>
    <property type="project" value="Ensembl"/>
</dbReference>
<dbReference type="GO" id="GO:0043005">
    <property type="term" value="C:neuron projection"/>
    <property type="evidence" value="ECO:0000314"/>
    <property type="project" value="ParkinsonsUK-UCL"/>
</dbReference>
<dbReference type="GO" id="GO:0043025">
    <property type="term" value="C:neuronal cell body"/>
    <property type="evidence" value="ECO:0000314"/>
    <property type="project" value="MGI"/>
</dbReference>
<dbReference type="GO" id="GO:0005654">
    <property type="term" value="C:nucleoplasm"/>
    <property type="evidence" value="ECO:0007669"/>
    <property type="project" value="Ensembl"/>
</dbReference>
<dbReference type="GO" id="GO:0005634">
    <property type="term" value="C:nucleus"/>
    <property type="evidence" value="ECO:0000250"/>
    <property type="project" value="UniProtKB"/>
</dbReference>
<dbReference type="GO" id="GO:0043204">
    <property type="term" value="C:perikaryon"/>
    <property type="evidence" value="ECO:0007669"/>
    <property type="project" value="UniProtKB-SubCell"/>
</dbReference>
<dbReference type="GO" id="GO:0048471">
    <property type="term" value="C:perinuclear region of cytoplasm"/>
    <property type="evidence" value="ECO:0000250"/>
    <property type="project" value="UniProtKB"/>
</dbReference>
<dbReference type="GO" id="GO:0001891">
    <property type="term" value="C:phagocytic cup"/>
    <property type="evidence" value="ECO:0000250"/>
    <property type="project" value="UniProtKB"/>
</dbReference>
<dbReference type="GO" id="GO:0005886">
    <property type="term" value="C:plasma membrane"/>
    <property type="evidence" value="ECO:0000266"/>
    <property type="project" value="MGI"/>
</dbReference>
<dbReference type="GO" id="GO:0015935">
    <property type="term" value="C:small ribosomal subunit"/>
    <property type="evidence" value="ECO:0000314"/>
    <property type="project" value="UniProtKB"/>
</dbReference>
<dbReference type="GO" id="GO:0051434">
    <property type="term" value="F:BH3 domain binding"/>
    <property type="evidence" value="ECO:0007669"/>
    <property type="project" value="Ensembl"/>
</dbReference>
<dbReference type="GO" id="GO:0030332">
    <property type="term" value="F:cyclin binding"/>
    <property type="evidence" value="ECO:0007669"/>
    <property type="project" value="Ensembl"/>
</dbReference>
<dbReference type="GO" id="GO:0008656">
    <property type="term" value="F:cysteine-type endopeptidase activator activity involved in apoptotic process"/>
    <property type="evidence" value="ECO:0007669"/>
    <property type="project" value="Ensembl"/>
</dbReference>
<dbReference type="GO" id="GO:0008200">
    <property type="term" value="F:ion channel inhibitor activity"/>
    <property type="evidence" value="ECO:0000314"/>
    <property type="project" value="UniProtKB"/>
</dbReference>
<dbReference type="GO" id="GO:0042803">
    <property type="term" value="F:protein homodimerization activity"/>
    <property type="evidence" value="ECO:0007669"/>
    <property type="project" value="Ensembl"/>
</dbReference>
<dbReference type="GO" id="GO:0005080">
    <property type="term" value="F:protein kinase C binding"/>
    <property type="evidence" value="ECO:0000250"/>
    <property type="project" value="UniProtKB"/>
</dbReference>
<dbReference type="GO" id="GO:0019903">
    <property type="term" value="F:protein phosphatase binding"/>
    <property type="evidence" value="ECO:0007669"/>
    <property type="project" value="Ensembl"/>
</dbReference>
<dbReference type="GO" id="GO:0030291">
    <property type="term" value="F:protein serine/threonine kinase inhibitor activity"/>
    <property type="evidence" value="ECO:0007669"/>
    <property type="project" value="Ensembl"/>
</dbReference>
<dbReference type="GO" id="GO:0030292">
    <property type="term" value="F:protein tyrosine kinase inhibitor activity"/>
    <property type="evidence" value="ECO:0000250"/>
    <property type="project" value="UniProtKB"/>
</dbReference>
<dbReference type="GO" id="GO:0030971">
    <property type="term" value="F:receptor tyrosine kinase binding"/>
    <property type="evidence" value="ECO:0000250"/>
    <property type="project" value="UniProtKB"/>
</dbReference>
<dbReference type="GO" id="GO:0043022">
    <property type="term" value="F:ribosome binding"/>
    <property type="evidence" value="ECO:0000250"/>
    <property type="project" value="UniProtKB"/>
</dbReference>
<dbReference type="GO" id="GO:0042169">
    <property type="term" value="F:SH2 domain binding"/>
    <property type="evidence" value="ECO:0000250"/>
    <property type="project" value="UniProtKB"/>
</dbReference>
<dbReference type="GO" id="GO:0035591">
    <property type="term" value="F:signaling adaptor activity"/>
    <property type="evidence" value="ECO:0000266"/>
    <property type="project" value="MGI"/>
</dbReference>
<dbReference type="GO" id="GO:0038023">
    <property type="term" value="F:signaling receptor activity"/>
    <property type="evidence" value="ECO:0000266"/>
    <property type="project" value="MGI"/>
</dbReference>
<dbReference type="GO" id="GO:0045182">
    <property type="term" value="F:translation regulator activity"/>
    <property type="evidence" value="ECO:0007669"/>
    <property type="project" value="InterPro"/>
</dbReference>
<dbReference type="GO" id="GO:0071333">
    <property type="term" value="P:cellular response to glucose stimulus"/>
    <property type="evidence" value="ECO:0007669"/>
    <property type="project" value="Ensembl"/>
</dbReference>
<dbReference type="GO" id="GO:0071363">
    <property type="term" value="P:cellular response to growth factor stimulus"/>
    <property type="evidence" value="ECO:0000250"/>
    <property type="project" value="UniProtKB"/>
</dbReference>
<dbReference type="GO" id="GO:0007369">
    <property type="term" value="P:gastrulation"/>
    <property type="evidence" value="ECO:0007669"/>
    <property type="project" value="UniProtKB-KW"/>
</dbReference>
<dbReference type="GO" id="GO:0035556">
    <property type="term" value="P:intracellular signal transduction"/>
    <property type="evidence" value="ECO:0000266"/>
    <property type="project" value="MGI"/>
</dbReference>
<dbReference type="GO" id="GO:0030308">
    <property type="term" value="P:negative regulation of cell growth"/>
    <property type="evidence" value="ECO:0000250"/>
    <property type="project" value="UniProtKB"/>
</dbReference>
<dbReference type="GO" id="GO:1903751">
    <property type="term" value="P:negative regulation of intrinsic apoptotic signaling pathway in response to hydrogen peroxide"/>
    <property type="evidence" value="ECO:0000316"/>
    <property type="project" value="ParkinsonsUK-UCL"/>
</dbReference>
<dbReference type="GO" id="GO:0050765">
    <property type="term" value="P:negative regulation of phagocytosis"/>
    <property type="evidence" value="ECO:0000250"/>
    <property type="project" value="UniProtKB"/>
</dbReference>
<dbReference type="GO" id="GO:0051898">
    <property type="term" value="P:negative regulation of phosphatidylinositol 3-kinase/protein kinase B signal transduction"/>
    <property type="evidence" value="ECO:0007669"/>
    <property type="project" value="Ensembl"/>
</dbReference>
<dbReference type="GO" id="GO:0045879">
    <property type="term" value="P:negative regulation of smoothened signaling pathway"/>
    <property type="evidence" value="ECO:0007669"/>
    <property type="project" value="Ensembl"/>
</dbReference>
<dbReference type="GO" id="GO:0017148">
    <property type="term" value="P:negative regulation of translation"/>
    <property type="evidence" value="ECO:0007669"/>
    <property type="project" value="Ensembl"/>
</dbReference>
<dbReference type="GO" id="GO:0030178">
    <property type="term" value="P:negative regulation of Wnt signaling pathway"/>
    <property type="evidence" value="ECO:0000250"/>
    <property type="project" value="UniProtKB"/>
</dbReference>
<dbReference type="GO" id="GO:0043473">
    <property type="term" value="P:pigmentation"/>
    <property type="evidence" value="ECO:0000315"/>
    <property type="project" value="MGI"/>
</dbReference>
<dbReference type="GO" id="GO:0034250">
    <property type="term" value="P:positive regulation of amide metabolic process"/>
    <property type="evidence" value="ECO:0000266"/>
    <property type="project" value="MGI"/>
</dbReference>
<dbReference type="GO" id="GO:0043065">
    <property type="term" value="P:positive regulation of apoptotic process"/>
    <property type="evidence" value="ECO:0000250"/>
    <property type="project" value="UniProtKB"/>
</dbReference>
<dbReference type="GO" id="GO:0030335">
    <property type="term" value="P:positive regulation of cell migration"/>
    <property type="evidence" value="ECO:0000250"/>
    <property type="project" value="UniProtKB"/>
</dbReference>
<dbReference type="GO" id="GO:2000543">
    <property type="term" value="P:positive regulation of gastrulation"/>
    <property type="evidence" value="ECO:0000250"/>
    <property type="project" value="UniProtKB"/>
</dbReference>
<dbReference type="GO" id="GO:0042998">
    <property type="term" value="P:positive regulation of Golgi to plasma membrane protein transport"/>
    <property type="evidence" value="ECO:0000250"/>
    <property type="project" value="UniProtKB"/>
</dbReference>
<dbReference type="GO" id="GO:0043547">
    <property type="term" value="P:positive regulation of GTPase activity"/>
    <property type="evidence" value="ECO:0000250"/>
    <property type="project" value="UniProtKB"/>
</dbReference>
<dbReference type="GO" id="GO:2001244">
    <property type="term" value="P:positive regulation of intrinsic apoptotic signaling pathway"/>
    <property type="evidence" value="ECO:0007669"/>
    <property type="project" value="Ensembl"/>
</dbReference>
<dbReference type="GO" id="GO:0045834">
    <property type="term" value="P:positive regulation of lipid metabolic process"/>
    <property type="evidence" value="ECO:0000266"/>
    <property type="project" value="MGI"/>
</dbReference>
<dbReference type="GO" id="GO:0051901">
    <property type="term" value="P:positive regulation of mitochondrial depolarization"/>
    <property type="evidence" value="ECO:0007669"/>
    <property type="project" value="Ensembl"/>
</dbReference>
<dbReference type="GO" id="GO:0032436">
    <property type="term" value="P:positive regulation of proteasomal ubiquitin-dependent protein catabolic process"/>
    <property type="evidence" value="ECO:0000250"/>
    <property type="project" value="UniProtKB"/>
</dbReference>
<dbReference type="GO" id="GO:0001934">
    <property type="term" value="P:positive regulation of protein phosphorylation"/>
    <property type="evidence" value="ECO:0000250"/>
    <property type="project" value="UniProtKB"/>
</dbReference>
<dbReference type="GO" id="GO:0031334">
    <property type="term" value="P:positive regulation of protein-containing complex assembly"/>
    <property type="evidence" value="ECO:0000250"/>
    <property type="project" value="UniProtKB"/>
</dbReference>
<dbReference type="GO" id="GO:0008104">
    <property type="term" value="P:protein localization"/>
    <property type="evidence" value="ECO:0000266"/>
    <property type="project" value="MGI"/>
</dbReference>
<dbReference type="GO" id="GO:0016567">
    <property type="term" value="P:protein ubiquitination"/>
    <property type="evidence" value="ECO:0000250"/>
    <property type="project" value="UniProtKB"/>
</dbReference>
<dbReference type="GO" id="GO:0106070">
    <property type="term" value="P:regulation of adenylate cyclase-activating G protein-coupled receptor signaling pathway"/>
    <property type="evidence" value="ECO:0007669"/>
    <property type="project" value="Ensembl"/>
</dbReference>
<dbReference type="GO" id="GO:0051726">
    <property type="term" value="P:regulation of cell cycle"/>
    <property type="evidence" value="ECO:0000250"/>
    <property type="project" value="UniProtKB"/>
</dbReference>
<dbReference type="GO" id="GO:0051302">
    <property type="term" value="P:regulation of cell division"/>
    <property type="evidence" value="ECO:0000250"/>
    <property type="project" value="UniProtKB"/>
</dbReference>
<dbReference type="GO" id="GO:2000114">
    <property type="term" value="P:regulation of establishment of cell polarity"/>
    <property type="evidence" value="ECO:0000250"/>
    <property type="project" value="UniProtKB"/>
</dbReference>
<dbReference type="GO" id="GO:1905038">
    <property type="term" value="P:regulation of membrane lipid metabolic process"/>
    <property type="evidence" value="ECO:0000266"/>
    <property type="project" value="MGI"/>
</dbReference>
<dbReference type="GO" id="GO:0032880">
    <property type="term" value="P:regulation of protein localization"/>
    <property type="evidence" value="ECO:0000250"/>
    <property type="project" value="UniProtKB"/>
</dbReference>
<dbReference type="GO" id="GO:0072344">
    <property type="term" value="P:rescue of stalled ribosome"/>
    <property type="evidence" value="ECO:0000250"/>
    <property type="project" value="UniProtKB"/>
</dbReference>
<dbReference type="GO" id="GO:0048511">
    <property type="term" value="P:rhythmic process"/>
    <property type="evidence" value="ECO:0007669"/>
    <property type="project" value="UniProtKB-KW"/>
</dbReference>
<dbReference type="GO" id="GO:0006412">
    <property type="term" value="P:translation"/>
    <property type="evidence" value="ECO:0000315"/>
    <property type="project" value="MGI"/>
</dbReference>
<dbReference type="GO" id="GO:0033209">
    <property type="term" value="P:tumor necrosis factor-mediated signaling pathway"/>
    <property type="evidence" value="ECO:0000266"/>
    <property type="project" value="MGI"/>
</dbReference>
<dbReference type="CDD" id="cd00200">
    <property type="entry name" value="WD40"/>
    <property type="match status" value="1"/>
</dbReference>
<dbReference type="FunFam" id="2.130.10.10:FF:001252">
    <property type="entry name" value="Receptor of activated protein C kinase 1"/>
    <property type="match status" value="1"/>
</dbReference>
<dbReference type="Gene3D" id="2.130.10.10">
    <property type="entry name" value="YVTN repeat-like/Quinoprotein amine dehydrogenase"/>
    <property type="match status" value="1"/>
</dbReference>
<dbReference type="InterPro" id="IPR020472">
    <property type="entry name" value="G-protein_beta_WD-40_rep"/>
</dbReference>
<dbReference type="InterPro" id="IPR045223">
    <property type="entry name" value="RACK1-like"/>
</dbReference>
<dbReference type="InterPro" id="IPR015943">
    <property type="entry name" value="WD40/YVTN_repeat-like_dom_sf"/>
</dbReference>
<dbReference type="InterPro" id="IPR019775">
    <property type="entry name" value="WD40_repeat_CS"/>
</dbReference>
<dbReference type="InterPro" id="IPR036322">
    <property type="entry name" value="WD40_repeat_dom_sf"/>
</dbReference>
<dbReference type="InterPro" id="IPR001680">
    <property type="entry name" value="WD40_rpt"/>
</dbReference>
<dbReference type="PANTHER" id="PTHR19868">
    <property type="entry name" value="RECEPTOR FOR ACTIVATED PROTEIN KINASE C RACK1"/>
    <property type="match status" value="1"/>
</dbReference>
<dbReference type="Pfam" id="PF00400">
    <property type="entry name" value="WD40"/>
    <property type="match status" value="7"/>
</dbReference>
<dbReference type="PRINTS" id="PR00320">
    <property type="entry name" value="GPROTEINBRPT"/>
</dbReference>
<dbReference type="SMART" id="SM00320">
    <property type="entry name" value="WD40"/>
    <property type="match status" value="7"/>
</dbReference>
<dbReference type="SUPFAM" id="SSF50978">
    <property type="entry name" value="WD40 repeat-like"/>
    <property type="match status" value="1"/>
</dbReference>
<dbReference type="PROSITE" id="PS00678">
    <property type="entry name" value="WD_REPEATS_1"/>
    <property type="match status" value="4"/>
</dbReference>
<dbReference type="PROSITE" id="PS50082">
    <property type="entry name" value="WD_REPEATS_2"/>
    <property type="match status" value="6"/>
</dbReference>
<dbReference type="PROSITE" id="PS50294">
    <property type="entry name" value="WD_REPEATS_REGION"/>
    <property type="match status" value="1"/>
</dbReference>
<protein>
    <recommendedName>
        <fullName evidence="11">Small ribosomal subunit protein RACK1</fullName>
    </recommendedName>
    <alternativeName>
        <fullName>12-3</fullName>
    </alternativeName>
    <alternativeName>
        <fullName>Guanine nucleotide-binding protein subunit beta-2-like 1</fullName>
    </alternativeName>
    <alternativeName>
        <fullName>Receptor for activated C kinase</fullName>
    </alternativeName>
    <alternativeName>
        <fullName>Receptor of activated protein C kinase 1</fullName>
    </alternativeName>
    <alternativeName>
        <fullName>Receptor of activated protein kinase C 1</fullName>
    </alternativeName>
    <alternativeName>
        <fullName>p205</fullName>
    </alternativeName>
    <component>
        <recommendedName>
            <fullName>Small ribosomal subunit protein RACK1, N-terminally processed</fullName>
        </recommendedName>
        <alternativeName>
            <fullName>Guanine nucleotide-binding protein subunit beta-2-like 1, N-terminally processed</fullName>
        </alternativeName>
        <alternativeName>
            <fullName>Receptor of activated protein C kinase 1, N-terminally processed</fullName>
        </alternativeName>
    </component>
</protein>
<comment type="function">
    <text evidence="2 4 5 6 7 8 9">Scaffolding protein involved in the recruitment, assembly and/or regulation of a variety of signaling molecules (PubMed:18258429, PubMed:20093473, PubMed:21262816, PubMed:33505023, PubMed:36517592, PubMed:7968370). Interacts with a wide variety of proteins and plays a role in many cellular processes (PubMed:18258429, PubMed:20093473, PubMed:21262816, PubMed:36517592, PubMed:7968370). Component of the 40S ribosomal subunit involved in translational repression (PubMed:36517592). Involved in the initiation of the ribosome quality control (RQC), a pathway that takes place when a ribosome has stalled during translation, by promoting ubiquitination of a subset of 40S ribosomal subunits (By similarity). Binds to and stabilizes activated protein kinase C (PKC), increasing PKC-mediated phosphorylation (By similarity). May recruit activated PKC to the ribosome, leading to phosphorylation of EIF6 (By similarity). Inhibits the activity of SRC kinases including SRC, LCK and YES1 (By similarity). Inhibits cell growth by prolonging the G0/G1 phase of the cell cycle (By similarity). Enhances phosphorylation of BMAL1 by PRKCA and inhibits transcriptional activity of the BMAL1-CLOCK heterodimer (PubMed:20093473). Facilitates ligand-independent nuclear translocation of AR following PKC activation, represses AR transactivation activity and is required for phosphorylation of AR by SRC (By similarity). Modulates IGF1R-dependent integrin signaling and promotes cell spreading and contact with the extracellular matrix (By similarity). Involved in PKC-dependent translocation of ADAM12 to the cell membrane (By similarity). Promotes the ubiquitination and proteasome-mediated degradation of proteins such as CLEC1B and HIF1A (By similarity). Required for VANGL2 membrane localization, inhibits Wnt signaling, and regulates cellular polarization and oriented cell division during gastrulation (PubMed:21262816). Required for PTK2/FAK1 phosphorylation and dephosphorylation (By similarity). Regulates internalization of the muscarinic receptor CHRM2 (By similarity). Promotes apoptosis by increasing oligomerization of BAX and disrupting the interaction of BAX with the anti-apoptotic factor BCL2L (By similarity). Inhibits TRPM6 channel activity (PubMed:18258429). Regulates cell surface expression of some GPCRs such as TBXA2R (By similarity). Plays a role in regulation of FLT1-mediated cell migration (By similarity). Involved in the transport of ABCB4 from the Golgi to the apical bile canalicular membrane (By similarity). Acts as an adapter for the dephosphorylation and inactivation of AKT1 by promoting recruitment of PP2A phosphatase to AKT1 (PubMed:33505023).</text>
</comment>
<comment type="subunit">
    <text evidence="2 4 5 7 8">Monomer; also forms homodimers and homooligomers (By similarity). Interacts with CPNE3 (By similarity). May interact with ABCB4 (By similarity). Component of the small (40S) ribosomal subunit (PubMed:36517592). Interacts with LARP4B. Interacts with LARP4. Interacts with PKD2L1 (By similarity). Binds NHERF1 (By similarity). Forms a ternary complex with TRIM63 and PRKCE (By similarity). Interacts with HABP4, KRT1 and OTUB1 (By similarity). Interacts with SRC (via SH2 domain); the interaction is enhanced by tyrosine phosphorylation of RACK1 (By similarity). Recruited in a circadian manner into a nuclear complex which also includes BMAL1 and PRKCA (PubMed:20093473). Interacts with AR (By similarity). Interacts with IGF1R but not with INSR (By similarity). Interacts with ADAM12 (By similarity). Interacts with CLEC1B (via N-terminal region) and with HIF1A; the interaction promotes their degradation (By similarity). Interacts with RHOA; this enhances RHOA activation and promotes cell migration (By similarity). Interacts with CHRM2; the interaction regulates CHRM2 internalization (By similarity). Interacts with TRPM6 (via kinase domain) (PubMed:18258429). Interacts with PTK2/FAK1; required for PTK2/FAK1 phosphorylation and dephosphorylation (By similarity). Interacts with FLT1 (By similarity). Interacts with HRAS (By similarity). Interacts with SLC9A5; this interaction regulates SLC9A5 cell-surface targeting and SLC9A5 activity (By similarity). Interacts with SLC9A6; this interaction regulates the distribution of SLC9A6 between endosomes and the plasma membrane (By similarity). Interacts with AIM2; promoting association with PP2A phosphatase and dephosphorylation of AKT1 (PubMed:33505023).</text>
</comment>
<comment type="interaction">
    <interactant intactId="EBI-296749">
        <id>P68040</id>
    </interactant>
    <interactant intactId="EBI-447960">
        <id>O88351</id>
        <label>Ikbkb</label>
    </interactant>
    <organismsDiffer>false</organismsDiffer>
    <experiments>4</experiments>
</comment>
<comment type="subcellular location">
    <subcellularLocation>
        <location evidence="2">Cell membrane</location>
        <topology evidence="2">Peripheral membrane protein</topology>
    </subcellularLocation>
    <subcellularLocation>
        <location evidence="5">Cytoplasm</location>
    </subcellularLocation>
    <subcellularLocation>
        <location evidence="2">Cytoplasm</location>
        <location evidence="2">Perinuclear region</location>
    </subcellularLocation>
    <subcellularLocation>
        <location evidence="5">Nucleus</location>
    </subcellularLocation>
    <subcellularLocation>
        <location evidence="3">Perikaryon</location>
    </subcellularLocation>
    <subcellularLocation>
        <location evidence="3">Cell projection</location>
        <location evidence="3">Dendrite</location>
    </subcellularLocation>
    <text evidence="2 3">Recruited to the plasma membrane through interaction with KRT1 which binds to membrane-bound ITGB1. PKC activation induces translocation from the perinuclear region to the cell periphery (By similarity). In the brain, detected mainly in cell bodies and dendrites with little expression in axonal fibers or nuclei (PubMed:16414032).</text>
</comment>
<comment type="tissue specificity">
    <text evidence="3 9">Strongly and ubiquitously expressed in the embryonic and early postnatal brain. At 11.5 dpc, expressed in a high-dorsal to low-ventral gradient throughout the brain. At 13.5 dpc, most abundant in the telecephalon. At 18.5 dpc, expressed most abundantly in layers 1-4 of the cortex, striatum, hippocampus, dentate gyrus, and specific thalamic nuclei. This expression decreases during postnatal development and is localized in the dentate gyrus, habenula, piriform cortex, paraventricular nucleus of the hypothalamus and supraoptic nucleus of the adult brain.</text>
</comment>
<comment type="developmental stage">
    <text evidence="3">Expressed throughout embryonic brain development with high levels detected at 11.5 dpc, 13.5 dpc and 18.5 dpc. Also detected at high levels in the adult brain.</text>
</comment>
<comment type="domain">
    <text evidence="2">The 7 WD repeats mediate protein-protein interactions with binding partners.</text>
</comment>
<comment type="PTM">
    <text evidence="1">Phosphorylated on Tyr-228 and/or Tyr-246 by SRC. This is required for binding to SRC (By similarity).</text>
</comment>
<comment type="similarity">
    <text evidence="11">Belongs to the WD repeat G protein beta family. Ribosomal protein RACK1 subfamily.</text>
</comment>
<comment type="sequence caution" evidence="11">
    <conflict type="frameshift">
        <sequence resource="EMBL-CDS" id="AAG29506"/>
    </conflict>
</comment>
<gene>
    <name evidence="12" type="primary">Rack1</name>
    <name type="synonym">Gnb2-rs1</name>
    <name type="synonym">Gnb2l1</name>
</gene>
<evidence type="ECO:0000250" key="1"/>
<evidence type="ECO:0000250" key="2">
    <source>
        <dbReference type="UniProtKB" id="P63244"/>
    </source>
</evidence>
<evidence type="ECO:0000269" key="3">
    <source>
    </source>
</evidence>
<evidence type="ECO:0000269" key="4">
    <source>
    </source>
</evidence>
<evidence type="ECO:0000269" key="5">
    <source>
    </source>
</evidence>
<evidence type="ECO:0000269" key="6">
    <source>
    </source>
</evidence>
<evidence type="ECO:0000269" key="7">
    <source>
    </source>
</evidence>
<evidence type="ECO:0000269" key="8">
    <source>
    </source>
</evidence>
<evidence type="ECO:0000269" key="9">
    <source>
    </source>
</evidence>
<evidence type="ECO:0000269" key="10">
    <source ref="8"/>
</evidence>
<evidence type="ECO:0000305" key="11"/>
<evidence type="ECO:0000312" key="12">
    <source>
        <dbReference type="MGI" id="MGI:101849"/>
    </source>
</evidence>
<evidence type="ECO:0007744" key="13">
    <source>
        <dbReference type="PDB" id="7CPU"/>
    </source>
</evidence>
<evidence type="ECO:0007744" key="14">
    <source>
        <dbReference type="PDB" id="7CPV"/>
    </source>
</evidence>
<evidence type="ECO:0007744" key="15">
    <source>
    </source>
</evidence>
<evidence type="ECO:0007744" key="16">
    <source>
    </source>
</evidence>
<sequence>MTEQMTLRGTLKGHNGWVTQIATTPQFPDMILSASRDKTIIMWKLTRDETNYGIPQRALRGHSHFVSDVVISSDGQFALSGSWDGTLRLWDLTTGTTTRRFVGHTKDVLSVAFSSDNRQIVSGSRDKTIKLWNTLGVCKYTVQDESHSEWVSCVRFSPNSSNPIIVSCGWDKLVKVWNLANCKLKTNHIGHTGYLNTVTVSPDGSLCASGGKDGQAMLWDLNEGKHLYTLDGGDIINALCFSPNRYWLCAATGPSIKIWDLEGKIIVDELKQEVISTSSKAEPPQCTSLAWSADGQTLFAGYTDNLVRVWQVTIGTR</sequence>
<accession>P68040</accession>
<accession>P25388</accession>
<accession>P99049</accession>
<accession>Q3THP0</accession>
<accession>Q3THY7</accession>
<accession>Q3TKQ0</accession>
<accession>Q3TW88</accession>
<accession>Q5NCC5</accession>
<accession>Q5NCC6</accession>
<accession>Q9CSQ0</accession>
<accession>Q9ERM6</accession>
<keyword id="KW-0002">3D-structure</keyword>
<keyword id="KW-0007">Acetylation</keyword>
<keyword id="KW-0053">Apoptosis</keyword>
<keyword id="KW-0090">Biological rhythms</keyword>
<keyword id="KW-0131">Cell cycle</keyword>
<keyword id="KW-1003">Cell membrane</keyword>
<keyword id="KW-0966">Cell projection</keyword>
<keyword id="KW-0963">Cytoplasm</keyword>
<keyword id="KW-0217">Developmental protein</keyword>
<keyword id="KW-0903">Direct protein sequencing</keyword>
<keyword id="KW-0306">Gastrulation</keyword>
<keyword id="KW-0341">Growth regulation</keyword>
<keyword id="KW-0472">Membrane</keyword>
<keyword id="KW-0539">Nucleus</keyword>
<keyword id="KW-0597">Phosphoprotein</keyword>
<keyword id="KW-1185">Reference proteome</keyword>
<keyword id="KW-0677">Repeat</keyword>
<keyword id="KW-0687">Ribonucleoprotein</keyword>
<keyword id="KW-0689">Ribosomal protein</keyword>
<keyword id="KW-0810">Translation regulation</keyword>
<keyword id="KW-0853">WD repeat</keyword>
<proteinExistence type="evidence at protein level"/>
<name>RACK1_MOUSE</name>
<feature type="chain" id="PRO_0000424482" description="Small ribosomal subunit protein RACK1">
    <location>
        <begin position="1"/>
        <end position="317"/>
    </location>
</feature>
<feature type="initiator methionine" description="Removed; alternate" evidence="10">
    <location>
        <position position="1"/>
    </location>
</feature>
<feature type="chain" id="PRO_0000127732" description="Small ribosomal subunit protein RACK1, N-terminally processed">
    <location>
        <begin position="2"/>
        <end position="317"/>
    </location>
</feature>
<feature type="repeat" description="WD 1">
    <location>
        <begin position="13"/>
        <end position="44"/>
    </location>
</feature>
<feature type="repeat" description="WD 2">
    <location>
        <begin position="61"/>
        <end position="91"/>
    </location>
</feature>
<feature type="repeat" description="WD 3">
    <location>
        <begin position="103"/>
        <end position="133"/>
    </location>
</feature>
<feature type="repeat" description="WD 4">
    <location>
        <begin position="146"/>
        <end position="178"/>
    </location>
</feature>
<feature type="repeat" description="WD 5">
    <location>
        <begin position="190"/>
        <end position="220"/>
    </location>
</feature>
<feature type="repeat" description="WD 6">
    <location>
        <begin position="231"/>
        <end position="260"/>
    </location>
</feature>
<feature type="repeat" description="WD 7">
    <location>
        <begin position="281"/>
        <end position="311"/>
    </location>
</feature>
<feature type="modified residue" description="N-acetylmethionine" evidence="2">
    <location>
        <position position="1"/>
    </location>
</feature>
<feature type="modified residue" description="N-acetylthreonine; in Guanine nucleotide-binding protein subunit beta-2-like 1, N-terminally processed" evidence="10">
    <location>
        <position position="2"/>
    </location>
</feature>
<feature type="modified residue" description="Phosphothreonine" evidence="2">
    <location>
        <position position="6"/>
    </location>
</feature>
<feature type="modified residue" description="Phosphothreonine" evidence="2">
    <location>
        <position position="10"/>
    </location>
</feature>
<feature type="modified residue" description="Phosphotyrosine; by ABL1" evidence="2">
    <location>
        <position position="52"/>
    </location>
</feature>
<feature type="modified residue" description="Phosphothreonine" evidence="2">
    <location>
        <position position="96"/>
    </location>
</feature>
<feature type="modified residue" description="N6-acetyllysine" evidence="16">
    <location>
        <position position="130"/>
    </location>
</feature>
<feature type="modified residue" description="N6-acetyllysine" evidence="16">
    <location>
        <position position="183"/>
    </location>
</feature>
<feature type="modified residue" description="Phosphotyrosine" evidence="2">
    <location>
        <position position="228"/>
    </location>
</feature>
<feature type="modified residue" description="Phosphoserine" evidence="2">
    <location>
        <position position="276"/>
    </location>
</feature>
<feature type="modified residue" description="Phosphothreonine" evidence="2">
    <location>
        <position position="277"/>
    </location>
</feature>
<feature type="modified residue" description="Phosphoserine" evidence="2">
    <location>
        <position position="278"/>
    </location>
</feature>
<feature type="modified residue" description="Phosphoserine" evidence="2">
    <location>
        <position position="279"/>
    </location>
</feature>
<feature type="modified residue" description="Phosphothreonine" evidence="15">
    <location>
        <position position="316"/>
    </location>
</feature>
<feature type="sequence conflict" description="In Ref. 3; BAE40068/BAE40156." evidence="11" ref="3">
    <original>G</original>
    <variation>R</variation>
    <location>
        <position position="9"/>
    </location>
</feature>
<feature type="sequence conflict" description="In Ref. 3; BAE40059/BAE40068/BAE40156." evidence="11" ref="3">
    <original>R</original>
    <variation>Q</variation>
    <location>
        <position position="125"/>
    </location>
</feature>
<feature type="sequence conflict" description="In Ref. 3; BAE35378." evidence="11" ref="3">
    <original>L</original>
    <variation>P</variation>
    <location>
        <position position="248"/>
    </location>
</feature>
<feature type="sequence conflict" description="In Ref. 6; AAG29506." evidence="11" ref="6">
    <original>I</original>
    <variation>M</variation>
    <location>
        <position position="266"/>
    </location>
</feature>
<feature type="sequence conflict" description="In Ref. 1; BAA06185." evidence="11" ref="1">
    <original>E</original>
    <variation>A</variation>
    <location>
        <position position="273"/>
    </location>
</feature>
<organism>
    <name type="scientific">Mus musculus</name>
    <name type="common">Mouse</name>
    <dbReference type="NCBI Taxonomy" id="10090"/>
    <lineage>
        <taxon>Eukaryota</taxon>
        <taxon>Metazoa</taxon>
        <taxon>Chordata</taxon>
        <taxon>Craniata</taxon>
        <taxon>Vertebrata</taxon>
        <taxon>Euteleostomi</taxon>
        <taxon>Mammalia</taxon>
        <taxon>Eutheria</taxon>
        <taxon>Euarchontoglires</taxon>
        <taxon>Glires</taxon>
        <taxon>Rodentia</taxon>
        <taxon>Myomorpha</taxon>
        <taxon>Muroidea</taxon>
        <taxon>Muridae</taxon>
        <taxon>Murinae</taxon>
        <taxon>Mus</taxon>
        <taxon>Mus</taxon>
    </lineage>
</organism>
<reference key="1">
    <citation type="journal article" date="1994" name="Brain Res. Mol. Brain Res.">
        <title>Cloning and expression of a neural differentiation-associated gene, p205, in the embryonal carcinoma cell line P19 and in the developing mouse.</title>
        <authorList>
            <person name="Imai Y."/>
            <person name="Suzuki Y."/>
            <person name="Tohyama M."/>
            <person name="Wanaka A."/>
            <person name="Takagi T."/>
        </authorList>
    </citation>
    <scope>NUCLEOTIDE SEQUENCE [MRNA]</scope>
    <scope>FUNCTION</scope>
    <scope>TISSUE SPECIFICITY</scope>
</reference>
<reference key="2">
    <citation type="submission" date="1993-09" db="EMBL/GenBank/DDBJ databases">
        <title>Primary sequence of the mouse guanine nucleotide binding protein related gene.</title>
        <authorList>
            <person name="Raj N.B.K."/>
            <person name="Su Y."/>
            <person name="Au W.C."/>
            <person name="Pitha P.M."/>
        </authorList>
    </citation>
    <scope>NUCLEOTIDE SEQUENCE [MRNA]</scope>
    <source>
        <strain>C57BL/6J</strain>
        <tissue>Spleen</tissue>
    </source>
</reference>
<reference key="3">
    <citation type="journal article" date="2005" name="Science">
        <title>The transcriptional landscape of the mammalian genome.</title>
        <authorList>
            <person name="Carninci P."/>
            <person name="Kasukawa T."/>
            <person name="Katayama S."/>
            <person name="Gough J."/>
            <person name="Frith M.C."/>
            <person name="Maeda N."/>
            <person name="Oyama R."/>
            <person name="Ravasi T."/>
            <person name="Lenhard B."/>
            <person name="Wells C."/>
            <person name="Kodzius R."/>
            <person name="Shimokawa K."/>
            <person name="Bajic V.B."/>
            <person name="Brenner S.E."/>
            <person name="Batalov S."/>
            <person name="Forrest A.R."/>
            <person name="Zavolan M."/>
            <person name="Davis M.J."/>
            <person name="Wilming L.G."/>
            <person name="Aidinis V."/>
            <person name="Allen J.E."/>
            <person name="Ambesi-Impiombato A."/>
            <person name="Apweiler R."/>
            <person name="Aturaliya R.N."/>
            <person name="Bailey T.L."/>
            <person name="Bansal M."/>
            <person name="Baxter L."/>
            <person name="Beisel K.W."/>
            <person name="Bersano T."/>
            <person name="Bono H."/>
            <person name="Chalk A.M."/>
            <person name="Chiu K.P."/>
            <person name="Choudhary V."/>
            <person name="Christoffels A."/>
            <person name="Clutterbuck D.R."/>
            <person name="Crowe M.L."/>
            <person name="Dalla E."/>
            <person name="Dalrymple B.P."/>
            <person name="de Bono B."/>
            <person name="Della Gatta G."/>
            <person name="di Bernardo D."/>
            <person name="Down T."/>
            <person name="Engstrom P."/>
            <person name="Fagiolini M."/>
            <person name="Faulkner G."/>
            <person name="Fletcher C.F."/>
            <person name="Fukushima T."/>
            <person name="Furuno M."/>
            <person name="Futaki S."/>
            <person name="Gariboldi M."/>
            <person name="Georgii-Hemming P."/>
            <person name="Gingeras T.R."/>
            <person name="Gojobori T."/>
            <person name="Green R.E."/>
            <person name="Gustincich S."/>
            <person name="Harbers M."/>
            <person name="Hayashi Y."/>
            <person name="Hensch T.K."/>
            <person name="Hirokawa N."/>
            <person name="Hill D."/>
            <person name="Huminiecki L."/>
            <person name="Iacono M."/>
            <person name="Ikeo K."/>
            <person name="Iwama A."/>
            <person name="Ishikawa T."/>
            <person name="Jakt M."/>
            <person name="Kanapin A."/>
            <person name="Katoh M."/>
            <person name="Kawasawa Y."/>
            <person name="Kelso J."/>
            <person name="Kitamura H."/>
            <person name="Kitano H."/>
            <person name="Kollias G."/>
            <person name="Krishnan S.P."/>
            <person name="Kruger A."/>
            <person name="Kummerfeld S.K."/>
            <person name="Kurochkin I.V."/>
            <person name="Lareau L.F."/>
            <person name="Lazarevic D."/>
            <person name="Lipovich L."/>
            <person name="Liu J."/>
            <person name="Liuni S."/>
            <person name="McWilliam S."/>
            <person name="Madan Babu M."/>
            <person name="Madera M."/>
            <person name="Marchionni L."/>
            <person name="Matsuda H."/>
            <person name="Matsuzawa S."/>
            <person name="Miki H."/>
            <person name="Mignone F."/>
            <person name="Miyake S."/>
            <person name="Morris K."/>
            <person name="Mottagui-Tabar S."/>
            <person name="Mulder N."/>
            <person name="Nakano N."/>
            <person name="Nakauchi H."/>
            <person name="Ng P."/>
            <person name="Nilsson R."/>
            <person name="Nishiguchi S."/>
            <person name="Nishikawa S."/>
            <person name="Nori F."/>
            <person name="Ohara O."/>
            <person name="Okazaki Y."/>
            <person name="Orlando V."/>
            <person name="Pang K.C."/>
            <person name="Pavan W.J."/>
            <person name="Pavesi G."/>
            <person name="Pesole G."/>
            <person name="Petrovsky N."/>
            <person name="Piazza S."/>
            <person name="Reed J."/>
            <person name="Reid J.F."/>
            <person name="Ring B.Z."/>
            <person name="Ringwald M."/>
            <person name="Rost B."/>
            <person name="Ruan Y."/>
            <person name="Salzberg S.L."/>
            <person name="Sandelin A."/>
            <person name="Schneider C."/>
            <person name="Schoenbach C."/>
            <person name="Sekiguchi K."/>
            <person name="Semple C.A."/>
            <person name="Seno S."/>
            <person name="Sessa L."/>
            <person name="Sheng Y."/>
            <person name="Shibata Y."/>
            <person name="Shimada H."/>
            <person name="Shimada K."/>
            <person name="Silva D."/>
            <person name="Sinclair B."/>
            <person name="Sperling S."/>
            <person name="Stupka E."/>
            <person name="Sugiura K."/>
            <person name="Sultana R."/>
            <person name="Takenaka Y."/>
            <person name="Taki K."/>
            <person name="Tammoja K."/>
            <person name="Tan S.L."/>
            <person name="Tang S."/>
            <person name="Taylor M.S."/>
            <person name="Tegner J."/>
            <person name="Teichmann S.A."/>
            <person name="Ueda H.R."/>
            <person name="van Nimwegen E."/>
            <person name="Verardo R."/>
            <person name="Wei C.L."/>
            <person name="Yagi K."/>
            <person name="Yamanishi H."/>
            <person name="Zabarovsky E."/>
            <person name="Zhu S."/>
            <person name="Zimmer A."/>
            <person name="Hide W."/>
            <person name="Bult C."/>
            <person name="Grimmond S.M."/>
            <person name="Teasdale R.D."/>
            <person name="Liu E.T."/>
            <person name="Brusic V."/>
            <person name="Quackenbush J."/>
            <person name="Wahlestedt C."/>
            <person name="Mattick J.S."/>
            <person name="Hume D.A."/>
            <person name="Kai C."/>
            <person name="Sasaki D."/>
            <person name="Tomaru Y."/>
            <person name="Fukuda S."/>
            <person name="Kanamori-Katayama M."/>
            <person name="Suzuki M."/>
            <person name="Aoki J."/>
            <person name="Arakawa T."/>
            <person name="Iida J."/>
            <person name="Imamura K."/>
            <person name="Itoh M."/>
            <person name="Kato T."/>
            <person name="Kawaji H."/>
            <person name="Kawagashira N."/>
            <person name="Kawashima T."/>
            <person name="Kojima M."/>
            <person name="Kondo S."/>
            <person name="Konno H."/>
            <person name="Nakano K."/>
            <person name="Ninomiya N."/>
            <person name="Nishio T."/>
            <person name="Okada M."/>
            <person name="Plessy C."/>
            <person name="Shibata K."/>
            <person name="Shiraki T."/>
            <person name="Suzuki S."/>
            <person name="Tagami M."/>
            <person name="Waki K."/>
            <person name="Watahiki A."/>
            <person name="Okamura-Oho Y."/>
            <person name="Suzuki H."/>
            <person name="Kawai J."/>
            <person name="Hayashizaki Y."/>
        </authorList>
    </citation>
    <scope>NUCLEOTIDE SEQUENCE [LARGE SCALE MRNA]</scope>
    <source>
        <strain>BALB/cJ</strain>
        <strain>C57BL/6J</strain>
        <strain>DBA/2J</strain>
        <tissue>Blastocyst</tissue>
        <tissue>Embryo</tissue>
        <tissue>Embryonic head</tissue>
        <tissue>Embryonic spinal ganglion</tissue>
        <tissue>Embryonic stem cell</tissue>
        <tissue>Head</tissue>
        <tissue>Kidney</tissue>
        <tissue>Mammary gland</tissue>
        <tissue>Osteoclast</tissue>
    </source>
</reference>
<reference key="4">
    <citation type="journal article" date="2009" name="PLoS Biol.">
        <title>Lineage-specific biology revealed by a finished genome assembly of the mouse.</title>
        <authorList>
            <person name="Church D.M."/>
            <person name="Goodstadt L."/>
            <person name="Hillier L.W."/>
            <person name="Zody M.C."/>
            <person name="Goldstein S."/>
            <person name="She X."/>
            <person name="Bult C.J."/>
            <person name="Agarwala R."/>
            <person name="Cherry J.L."/>
            <person name="DiCuccio M."/>
            <person name="Hlavina W."/>
            <person name="Kapustin Y."/>
            <person name="Meric P."/>
            <person name="Maglott D."/>
            <person name="Birtle Z."/>
            <person name="Marques A.C."/>
            <person name="Graves T."/>
            <person name="Zhou S."/>
            <person name="Teague B."/>
            <person name="Potamousis K."/>
            <person name="Churas C."/>
            <person name="Place M."/>
            <person name="Herschleb J."/>
            <person name="Runnheim R."/>
            <person name="Forrest D."/>
            <person name="Amos-Landgraf J."/>
            <person name="Schwartz D.C."/>
            <person name="Cheng Z."/>
            <person name="Lindblad-Toh K."/>
            <person name="Eichler E.E."/>
            <person name="Ponting C.P."/>
        </authorList>
    </citation>
    <scope>NUCLEOTIDE SEQUENCE [LARGE SCALE GENOMIC DNA]</scope>
    <source>
        <strain>C57BL/6J</strain>
    </source>
</reference>
<reference key="5">
    <citation type="submission" date="2005-09" db="EMBL/GenBank/DDBJ databases">
        <authorList>
            <person name="Mural R.J."/>
            <person name="Adams M.D."/>
            <person name="Myers E.W."/>
            <person name="Smith H.O."/>
            <person name="Venter J.C."/>
        </authorList>
    </citation>
    <scope>NUCLEOTIDE SEQUENCE [LARGE SCALE GENOMIC DNA]</scope>
</reference>
<reference key="6">
    <citation type="journal article" date="2004" name="Genome Res.">
        <title>The status, quality, and expansion of the NIH full-length cDNA project: the Mammalian Gene Collection (MGC).</title>
        <authorList>
            <consortium name="The MGC Project Team"/>
        </authorList>
    </citation>
    <scope>NUCLEOTIDE SEQUENCE [LARGE SCALE MRNA]</scope>
    <source>
        <strain>C57BL/6J</strain>
        <tissue>Brain</tissue>
    </source>
</reference>
<reference key="7">
    <citation type="submission" date="2000-08" db="EMBL/GenBank/DDBJ databases">
        <title>Genomic structure and expression of mouse receptor for activated C kinase (RACK1).</title>
        <authorList>
            <person name="Choi D."/>
            <person name="Messing R.O."/>
        </authorList>
    </citation>
    <scope>NUCLEOTIDE SEQUENCE [GENOMIC DNA] OF 1-296</scope>
    <source>
        <strain>129/SvJ</strain>
    </source>
</reference>
<reference key="8">
    <citation type="submission" date="2006-03" db="UniProtKB">
        <authorList>
            <person name="Kanor S."/>
            <person name="Quadroni M."/>
            <person name="Bienvenut W.V."/>
        </authorList>
    </citation>
    <scope>PROTEIN SEQUENCE OF 2-11 AND 271-279</scope>
    <scope>CLEAVAGE OF INITIATOR METHIONINE</scope>
    <scope>ACETYLATION AT THR-2</scope>
    <scope>IDENTIFICATION BY MASS SPECTROMETRY</scope>
    <source>
        <strain>C57BL/6J</strain>
        <tissue>Skeletal muscle</tissue>
    </source>
</reference>
<reference key="9">
    <citation type="submission" date="2007-07" db="UniProtKB">
        <authorList>
            <person name="Lubec G."/>
            <person name="Klug S."/>
            <person name="Yang J.W."/>
            <person name="Zigmond M."/>
        </authorList>
    </citation>
    <scope>PROTEIN SEQUENCE OF 226-317</scope>
    <scope>IDENTIFICATION BY MASS SPECTROMETRY</scope>
    <source>
        <tissue>Brain</tissue>
        <tissue>Hippocampus</tissue>
    </source>
</reference>
<reference key="10">
    <citation type="journal article" date="2006" name="Brain Res.">
        <title>Localization of the scaffolding protein RACK1 in the developing and adult mouse brain.</title>
        <authorList>
            <person name="Ashique A.M."/>
            <person name="Kharazia V."/>
            <person name="Yaka R."/>
            <person name="Phamluong K."/>
            <person name="Peterson A.S."/>
            <person name="Ron D."/>
        </authorList>
    </citation>
    <scope>SUBCELLULAR LOCATION</scope>
    <scope>TISSUE SPECIFICITY</scope>
    <scope>DEVELOPMENTAL STAGE</scope>
</reference>
<reference key="11">
    <citation type="journal article" date="2008" name="Curr. Biol.">
        <title>RACK1 inhibits TRPM6 activity via phosphorylation of the fused alpha-kinase domain.</title>
        <authorList>
            <person name="Cao G."/>
            <person name="Thebault S."/>
            <person name="van der Wijst J."/>
            <person name="van der Kemp A."/>
            <person name="Lasonder E."/>
            <person name="Bindels R.J."/>
            <person name="Hoenderop J.G."/>
        </authorList>
    </citation>
    <scope>FUNCTION</scope>
    <scope>INTERACTION WITH TRPM6</scope>
</reference>
<reference key="12">
    <citation type="journal article" date="2010" name="Cell">
        <title>A tissue-specific atlas of mouse protein phosphorylation and expression.</title>
        <authorList>
            <person name="Huttlin E.L."/>
            <person name="Jedrychowski M.P."/>
            <person name="Elias J.E."/>
            <person name="Goswami T."/>
            <person name="Rad R."/>
            <person name="Beausoleil S.A."/>
            <person name="Villen J."/>
            <person name="Haas W."/>
            <person name="Sowa M.E."/>
            <person name="Gygi S.P."/>
        </authorList>
    </citation>
    <scope>PHOSPHORYLATION [LARGE SCALE ANALYSIS] AT THR-316</scope>
    <scope>IDENTIFICATION BY MASS SPECTROMETRY [LARGE SCALE ANALYSIS]</scope>
    <source>
        <tissue>Brain</tissue>
        <tissue>Brown adipose tissue</tissue>
        <tissue>Heart</tissue>
        <tissue>Kidney</tissue>
        <tissue>Liver</tissue>
        <tissue>Lung</tissue>
        <tissue>Pancreas</tissue>
        <tissue>Spleen</tissue>
        <tissue>Testis</tissue>
    </source>
</reference>
<reference key="13">
    <citation type="journal article" date="2010" name="Science">
        <title>Identification of RACK1 and protein kinase Calpha as integral components of the mammalian circadian clock.</title>
        <authorList>
            <person name="Robles M.S."/>
            <person name="Boyault C."/>
            <person name="Knutti D."/>
            <person name="Padmanabhan K."/>
            <person name="Weitz C.J."/>
        </authorList>
    </citation>
    <scope>FUNCTION</scope>
    <scope>INTERACTION WITH BMAL1 AND PRKCA</scope>
    <scope>SUBCELLULAR LOCATION</scope>
    <scope>IDENTIFICATION BY MASS SPECTROMETRY</scope>
</reference>
<reference key="14">
    <citation type="journal article" date="2011" name="Proc. Natl. Acad. Sci. U.S.A.">
        <title>Rack1 is required for Vangl2 membrane localization and planar cell polarity signaling while attenuating canonical Wnt activity.</title>
        <authorList>
            <person name="Li S."/>
            <person name="Esterberg R."/>
            <person name="Lachance V."/>
            <person name="Ren D."/>
            <person name="Radde-Gallwitz K."/>
            <person name="Chi F."/>
            <person name="Parent J.L."/>
            <person name="Fritz A."/>
            <person name="Chen P."/>
        </authorList>
    </citation>
    <scope>FUNCTION</scope>
</reference>
<reference key="15">
    <citation type="journal article" date="2013" name="Mol. Cell">
        <title>SIRT5-mediated lysine desuccinylation impacts diverse metabolic pathways.</title>
        <authorList>
            <person name="Park J."/>
            <person name="Chen Y."/>
            <person name="Tishkoff D.X."/>
            <person name="Peng C."/>
            <person name="Tan M."/>
            <person name="Dai L."/>
            <person name="Xie Z."/>
            <person name="Zhang Y."/>
            <person name="Zwaans B.M."/>
            <person name="Skinner M.E."/>
            <person name="Lombard D.B."/>
            <person name="Zhao Y."/>
        </authorList>
    </citation>
    <scope>ACETYLATION [LARGE SCALE ANALYSIS] AT LYS-130 AND LYS-183</scope>
    <scope>IDENTIFICATION BY MASS SPECTROMETRY [LARGE SCALE ANALYSIS]</scope>
    <source>
        <tissue>Embryonic fibroblast</tissue>
    </source>
</reference>
<reference key="16">
    <citation type="journal article" date="2021" name="Nature">
        <title>AIM2 in regulatory T cells restrains autoimmune diseases.</title>
        <authorList>
            <person name="Chou W.C."/>
            <person name="Guo Z."/>
            <person name="Guo H."/>
            <person name="Chen L."/>
            <person name="Zhang G."/>
            <person name="Liang K."/>
            <person name="Xie L."/>
            <person name="Tan X."/>
            <person name="Gibson S.A."/>
            <person name="Rampanelli E."/>
            <person name="Wang Y."/>
            <person name="Montgomery S.A."/>
            <person name="Brickey W.J."/>
            <person name="Deng M."/>
            <person name="Freeman L."/>
            <person name="Zhang S."/>
            <person name="Su M.A."/>
            <person name="Chen X."/>
            <person name="Wan Y.Y."/>
            <person name="Ting J.P."/>
        </authorList>
    </citation>
    <scope>FUNCTION</scope>
    <scope>INTERACTION WITH AIM2</scope>
</reference>
<reference evidence="13 14" key="17">
    <citation type="journal article" date="2022" name="Nature">
        <title>A male germ-cell-specific ribosome controls male fertility.</title>
        <authorList>
            <person name="Li H."/>
            <person name="Huo Y."/>
            <person name="He X."/>
            <person name="Yao L."/>
            <person name="Zhang H."/>
            <person name="Cui Y."/>
            <person name="Xiao H."/>
            <person name="Xie W."/>
            <person name="Zhang D."/>
            <person name="Wang Y."/>
            <person name="Zhang S."/>
            <person name="Tu H."/>
            <person name="Cheng Y."/>
            <person name="Guo Y."/>
            <person name="Cao X."/>
            <person name="Zhu Y."/>
            <person name="Jiang T."/>
            <person name="Guo X."/>
            <person name="Qin Y."/>
            <person name="Sha J."/>
        </authorList>
    </citation>
    <scope>STRUCTURE BY ELECTRON MICROSCOPY (3.03 ANGSTROMS) OF RIBOSOME</scope>
    <scope>FUNCTION</scope>
    <scope>SUBUNIT</scope>
    <scope>SUBCELLULAR LOCATION</scope>
</reference>